<feature type="chain" id="PRO_1000184954" description="tRNA N6-adenosine threonylcarbamoyltransferase">
    <location>
        <begin position="1"/>
        <end position="359"/>
    </location>
</feature>
<feature type="region of interest" description="Disordered" evidence="2">
    <location>
        <begin position="328"/>
        <end position="359"/>
    </location>
</feature>
<feature type="binding site" evidence="1">
    <location>
        <position position="115"/>
    </location>
    <ligand>
        <name>Fe cation</name>
        <dbReference type="ChEBI" id="CHEBI:24875"/>
    </ligand>
</feature>
<feature type="binding site" evidence="1">
    <location>
        <position position="119"/>
    </location>
    <ligand>
        <name>Fe cation</name>
        <dbReference type="ChEBI" id="CHEBI:24875"/>
    </ligand>
</feature>
<feature type="binding site" evidence="1">
    <location>
        <begin position="137"/>
        <end position="141"/>
    </location>
    <ligand>
        <name>substrate</name>
    </ligand>
</feature>
<feature type="binding site" evidence="1">
    <location>
        <position position="170"/>
    </location>
    <ligand>
        <name>substrate</name>
    </ligand>
</feature>
<feature type="binding site" evidence="1">
    <location>
        <position position="183"/>
    </location>
    <ligand>
        <name>substrate</name>
    </ligand>
</feature>
<feature type="binding site" evidence="1">
    <location>
        <position position="283"/>
    </location>
    <ligand>
        <name>substrate</name>
    </ligand>
</feature>
<feature type="binding site" evidence="1">
    <location>
        <position position="311"/>
    </location>
    <ligand>
        <name>Fe cation</name>
        <dbReference type="ChEBI" id="CHEBI:24875"/>
    </ligand>
</feature>
<evidence type="ECO:0000255" key="1">
    <source>
        <dbReference type="HAMAP-Rule" id="MF_01445"/>
    </source>
</evidence>
<evidence type="ECO:0000256" key="2">
    <source>
        <dbReference type="SAM" id="MobiDB-lite"/>
    </source>
</evidence>
<keyword id="KW-0012">Acyltransferase</keyword>
<keyword id="KW-0963">Cytoplasm</keyword>
<keyword id="KW-0408">Iron</keyword>
<keyword id="KW-0479">Metal-binding</keyword>
<keyword id="KW-0808">Transferase</keyword>
<keyword id="KW-0819">tRNA processing</keyword>
<dbReference type="EC" id="2.3.1.234" evidence="1"/>
<dbReference type="EMBL" id="CP001488">
    <property type="protein sequence ID" value="ACO01604.1"/>
    <property type="molecule type" value="Genomic_DNA"/>
</dbReference>
<dbReference type="RefSeq" id="WP_002964958.1">
    <property type="nucleotide sequence ID" value="NC_012441.1"/>
</dbReference>
<dbReference type="SMR" id="C0RFD2"/>
<dbReference type="GeneID" id="97534824"/>
<dbReference type="KEGG" id="bmi:BMEA_A1941"/>
<dbReference type="HOGENOM" id="CLU_023208_0_2_5"/>
<dbReference type="Proteomes" id="UP000001748">
    <property type="component" value="Chromosome I"/>
</dbReference>
<dbReference type="GO" id="GO:0005737">
    <property type="term" value="C:cytoplasm"/>
    <property type="evidence" value="ECO:0007669"/>
    <property type="project" value="UniProtKB-SubCell"/>
</dbReference>
<dbReference type="GO" id="GO:0005506">
    <property type="term" value="F:iron ion binding"/>
    <property type="evidence" value="ECO:0007669"/>
    <property type="project" value="UniProtKB-UniRule"/>
</dbReference>
<dbReference type="GO" id="GO:0061711">
    <property type="term" value="F:N(6)-L-threonylcarbamoyladenine synthase activity"/>
    <property type="evidence" value="ECO:0007669"/>
    <property type="project" value="UniProtKB-EC"/>
</dbReference>
<dbReference type="GO" id="GO:0002949">
    <property type="term" value="P:tRNA threonylcarbamoyladenosine modification"/>
    <property type="evidence" value="ECO:0007669"/>
    <property type="project" value="UniProtKB-UniRule"/>
</dbReference>
<dbReference type="CDD" id="cd24133">
    <property type="entry name" value="ASKHA_NBD_TsaD_bac"/>
    <property type="match status" value="1"/>
</dbReference>
<dbReference type="FunFam" id="3.30.420.40:FF:000040">
    <property type="entry name" value="tRNA N6-adenosine threonylcarbamoyltransferase"/>
    <property type="match status" value="1"/>
</dbReference>
<dbReference type="Gene3D" id="3.30.420.40">
    <property type="match status" value="2"/>
</dbReference>
<dbReference type="HAMAP" id="MF_01445">
    <property type="entry name" value="TsaD"/>
    <property type="match status" value="1"/>
</dbReference>
<dbReference type="InterPro" id="IPR043129">
    <property type="entry name" value="ATPase_NBD"/>
</dbReference>
<dbReference type="InterPro" id="IPR000905">
    <property type="entry name" value="Gcp-like_dom"/>
</dbReference>
<dbReference type="InterPro" id="IPR017861">
    <property type="entry name" value="KAE1/TsaD"/>
</dbReference>
<dbReference type="InterPro" id="IPR022450">
    <property type="entry name" value="TsaD"/>
</dbReference>
<dbReference type="NCBIfam" id="TIGR00329">
    <property type="entry name" value="gcp_kae1"/>
    <property type="match status" value="1"/>
</dbReference>
<dbReference type="NCBIfam" id="TIGR03723">
    <property type="entry name" value="T6A_TsaD_YgjD"/>
    <property type="match status" value="1"/>
</dbReference>
<dbReference type="PANTHER" id="PTHR11735">
    <property type="entry name" value="TRNA N6-ADENOSINE THREONYLCARBAMOYLTRANSFERASE"/>
    <property type="match status" value="1"/>
</dbReference>
<dbReference type="PANTHER" id="PTHR11735:SF6">
    <property type="entry name" value="TRNA N6-ADENOSINE THREONYLCARBAMOYLTRANSFERASE, MITOCHONDRIAL"/>
    <property type="match status" value="1"/>
</dbReference>
<dbReference type="Pfam" id="PF00814">
    <property type="entry name" value="TsaD"/>
    <property type="match status" value="1"/>
</dbReference>
<dbReference type="PRINTS" id="PR00789">
    <property type="entry name" value="OSIALOPTASE"/>
</dbReference>
<dbReference type="SUPFAM" id="SSF53067">
    <property type="entry name" value="Actin-like ATPase domain"/>
    <property type="match status" value="2"/>
</dbReference>
<reference key="1">
    <citation type="submission" date="2009-03" db="EMBL/GenBank/DDBJ databases">
        <title>Brucella melitensis ATCC 23457 whole genome shotgun sequencing project.</title>
        <authorList>
            <person name="Setubal J.C."/>
            <person name="Boyle S."/>
            <person name="Crasta O.R."/>
            <person name="Gillespie J.J."/>
            <person name="Kenyon R.W."/>
            <person name="Lu J."/>
            <person name="Mane S."/>
            <person name="Nagrani S."/>
            <person name="Shallom J.M."/>
            <person name="Shallom S."/>
            <person name="Shukla M."/>
            <person name="Snyder E.E."/>
            <person name="Sobral B.W."/>
            <person name="Wattam A.R."/>
            <person name="Will R."/>
            <person name="Williams K."/>
            <person name="Yoo H."/>
            <person name="Munk C."/>
            <person name="Tapia R."/>
            <person name="Han C."/>
            <person name="Detter J.C."/>
            <person name="Bruce D."/>
            <person name="Brettin T.S."/>
        </authorList>
    </citation>
    <scope>NUCLEOTIDE SEQUENCE [LARGE SCALE GENOMIC DNA]</scope>
    <source>
        <strain>ATCC 23457</strain>
    </source>
</reference>
<comment type="function">
    <text evidence="1">Required for the formation of a threonylcarbamoyl group on adenosine at position 37 (t(6)A37) in tRNAs that read codons beginning with adenine. Is involved in the transfer of the threonylcarbamoyl moiety of threonylcarbamoyl-AMP (TC-AMP) to the N6 group of A37, together with TsaE and TsaB. TsaD likely plays a direct catalytic role in this reaction.</text>
</comment>
<comment type="catalytic activity">
    <reaction evidence="1">
        <text>L-threonylcarbamoyladenylate + adenosine(37) in tRNA = N(6)-L-threonylcarbamoyladenosine(37) in tRNA + AMP + H(+)</text>
        <dbReference type="Rhea" id="RHEA:37059"/>
        <dbReference type="Rhea" id="RHEA-COMP:10162"/>
        <dbReference type="Rhea" id="RHEA-COMP:10163"/>
        <dbReference type="ChEBI" id="CHEBI:15378"/>
        <dbReference type="ChEBI" id="CHEBI:73682"/>
        <dbReference type="ChEBI" id="CHEBI:74411"/>
        <dbReference type="ChEBI" id="CHEBI:74418"/>
        <dbReference type="ChEBI" id="CHEBI:456215"/>
        <dbReference type="EC" id="2.3.1.234"/>
    </reaction>
</comment>
<comment type="cofactor">
    <cofactor evidence="1">
        <name>Fe(2+)</name>
        <dbReference type="ChEBI" id="CHEBI:29033"/>
    </cofactor>
    <text evidence="1">Binds 1 Fe(2+) ion per subunit.</text>
</comment>
<comment type="subcellular location">
    <subcellularLocation>
        <location evidence="1">Cytoplasm</location>
    </subcellularLocation>
</comment>
<comment type="similarity">
    <text evidence="1">Belongs to the KAE1 / TsaD family.</text>
</comment>
<sequence length="359" mass="37982">MRVLGIETSCDETAAAIVERDDMGEGRILSNVVLSQIAEHEPYGGVVPEIAARAHVEALDRLVDRALNDAGLKLYEVDAVAATAGPGLIGGLIVGLMTAKALAMAAQKPFYAVNHLEGHALTARLTDGLPFPYLLLLVSGGHTQMVLVRGIGDYERLGTTIDDALGEAFDKTAKLLGLPYPGGPAVERMALQGDQKRFALPRPLKGEARLDFSFSGLKTAVRQTATELVPLTDQDVTDICASFQAAVADTLSDRVGRSLERFKTEFPDCATPSLVVAGGVAANKTLRAALENLCTRHGFAFIAPPLNLCTDNAAMIAWAGAERAATQAPDSLDIAPRSRWPLDEKSAPVFGTGRRGAKA</sequence>
<protein>
    <recommendedName>
        <fullName evidence="1">tRNA N6-adenosine threonylcarbamoyltransferase</fullName>
        <ecNumber evidence="1">2.3.1.234</ecNumber>
    </recommendedName>
    <alternativeName>
        <fullName evidence="1">N6-L-threonylcarbamoyladenine synthase</fullName>
        <shortName evidence="1">t(6)A synthase</shortName>
    </alternativeName>
    <alternativeName>
        <fullName evidence="1">t(6)A37 threonylcarbamoyladenosine biosynthesis protein TsaD</fullName>
    </alternativeName>
    <alternativeName>
        <fullName evidence="1">tRNA threonylcarbamoyladenosine biosynthesis protein TsaD</fullName>
    </alternativeName>
</protein>
<name>TSAD_BRUMB</name>
<accession>C0RFD2</accession>
<proteinExistence type="inferred from homology"/>
<organism>
    <name type="scientific">Brucella melitensis biotype 2 (strain ATCC 23457)</name>
    <dbReference type="NCBI Taxonomy" id="546272"/>
    <lineage>
        <taxon>Bacteria</taxon>
        <taxon>Pseudomonadati</taxon>
        <taxon>Pseudomonadota</taxon>
        <taxon>Alphaproteobacteria</taxon>
        <taxon>Hyphomicrobiales</taxon>
        <taxon>Brucellaceae</taxon>
        <taxon>Brucella/Ochrobactrum group</taxon>
        <taxon>Brucella</taxon>
    </lineage>
</organism>
<gene>
    <name evidence="1" type="primary">tsaD</name>
    <name type="synonym">gcp</name>
    <name type="ordered locus">BMEA_A1941</name>
</gene>